<accession>Q1XDA1</accession>
<organism>
    <name type="scientific">Pyropia yezoensis</name>
    <name type="common">Susabi-nori</name>
    <name type="synonym">Porphyra yezoensis</name>
    <dbReference type="NCBI Taxonomy" id="2788"/>
    <lineage>
        <taxon>Eukaryota</taxon>
        <taxon>Rhodophyta</taxon>
        <taxon>Bangiophyceae</taxon>
        <taxon>Bangiales</taxon>
        <taxon>Bangiaceae</taxon>
        <taxon>Pyropia</taxon>
    </lineage>
</organism>
<feature type="chain" id="PRO_0000277250" description="Ferredoxin-thioredoxin reductase, catalytic chain">
    <location>
        <begin position="1"/>
        <end position="116"/>
    </location>
</feature>
<feature type="active site" description="Nucleophile" evidence="1">
    <location>
        <position position="59"/>
    </location>
</feature>
<feature type="binding site" evidence="1">
    <location>
        <position position="57"/>
    </location>
    <ligand>
        <name>[4Fe-4S] cluster</name>
        <dbReference type="ChEBI" id="CHEBI:49883"/>
    </ligand>
</feature>
<feature type="binding site" evidence="1">
    <location>
        <position position="76"/>
    </location>
    <ligand>
        <name>[4Fe-4S] cluster</name>
        <dbReference type="ChEBI" id="CHEBI:49883"/>
    </ligand>
</feature>
<feature type="binding site" evidence="1">
    <location>
        <position position="78"/>
    </location>
    <ligand>
        <name>[4Fe-4S] cluster</name>
        <dbReference type="ChEBI" id="CHEBI:49883"/>
    </ligand>
</feature>
<feature type="binding site" evidence="1">
    <location>
        <position position="87"/>
    </location>
    <ligand>
        <name>[4Fe-4S] cluster</name>
        <dbReference type="ChEBI" id="CHEBI:49883"/>
    </ligand>
</feature>
<feature type="site" description="Increases the nucleophilicity of the active site Cys" evidence="1">
    <location>
        <position position="88"/>
    </location>
</feature>
<feature type="disulfide bond" description="Redox-active" evidence="1">
    <location>
        <begin position="59"/>
        <end position="89"/>
    </location>
</feature>
<name>FTRC_PYRYE</name>
<protein>
    <recommendedName>
        <fullName>Ferredoxin-thioredoxin reductase, catalytic chain</fullName>
        <shortName>FTR-C</shortName>
        <ecNumber>1.8.7.2</ecNumber>
    </recommendedName>
    <alternativeName>
        <fullName>Ferredoxin-thioredoxin reductase subunit B</fullName>
        <shortName>FTR-B</shortName>
    </alternativeName>
</protein>
<comment type="function">
    <text evidence="1">Catalytic subunit of the ferredoxin-thioredoxin reductase (FTR), which catalyzes the two-electron reduction of thioredoxins by the electrons provided by reduced ferredoxin.</text>
</comment>
<comment type="catalytic activity">
    <reaction>
        <text>[thioredoxin]-disulfide + 2 reduced [2Fe-2S]-[ferredoxin] + 2 H(+) = [thioredoxin]-dithiol + 2 oxidized [2Fe-2S]-[ferredoxin]</text>
        <dbReference type="Rhea" id="RHEA:42336"/>
        <dbReference type="Rhea" id="RHEA-COMP:10000"/>
        <dbReference type="Rhea" id="RHEA-COMP:10001"/>
        <dbReference type="Rhea" id="RHEA-COMP:10698"/>
        <dbReference type="Rhea" id="RHEA-COMP:10700"/>
        <dbReference type="ChEBI" id="CHEBI:15378"/>
        <dbReference type="ChEBI" id="CHEBI:29950"/>
        <dbReference type="ChEBI" id="CHEBI:33737"/>
        <dbReference type="ChEBI" id="CHEBI:33738"/>
        <dbReference type="ChEBI" id="CHEBI:50058"/>
        <dbReference type="EC" id="1.8.7.2"/>
    </reaction>
</comment>
<comment type="cofactor">
    <cofactor evidence="1">
        <name>[4Fe-4S] cluster</name>
        <dbReference type="ChEBI" id="CHEBI:49883"/>
    </cofactor>
    <text evidence="1">Binds 1 [4Fe-4S] cluster.</text>
</comment>
<comment type="subunit">
    <text evidence="1">Heterodimer of subunit A (variable subunit) and subunit B (catalytic subunit). Heterodimeric FTR forms a complex with ferredoxin and thioredoxin (By similarity).</text>
</comment>
<comment type="subcellular location">
    <subcellularLocation>
        <location>Plastid</location>
        <location>Chloroplast</location>
    </subcellularLocation>
</comment>
<comment type="similarity">
    <text evidence="2">Belongs to the ferredoxin thioredoxin reductase beta subunit family.</text>
</comment>
<comment type="sequence caution" evidence="2">
    <conflict type="erroneous initiation">
        <sequence resource="EMBL-CDS" id="BAE92510"/>
    </conflict>
    <text>Extended N-terminus.</text>
</comment>
<reference key="1">
    <citation type="submission" date="2003-11" db="EMBL/GenBank/DDBJ databases">
        <title>Whole genome sequence of Porphyra yezoensis chloroplast.</title>
        <authorList>
            <person name="Kunimoto M."/>
            <person name="Morishima K."/>
            <person name="Yoshikawa M."/>
            <person name="Fukuda S."/>
            <person name="Kobayashi T."/>
            <person name="Kobayashi M."/>
            <person name="Okazaki T."/>
            <person name="Ohara I."/>
            <person name="Nakayama I."/>
        </authorList>
    </citation>
    <scope>NUCLEOTIDE SEQUENCE [LARGE SCALE GENOMIC DNA]</scope>
    <source>
        <strain>U-51</strain>
    </source>
</reference>
<keyword id="KW-0004">4Fe-4S</keyword>
<keyword id="KW-0150">Chloroplast</keyword>
<keyword id="KW-1015">Disulfide bond</keyword>
<keyword id="KW-0408">Iron</keyword>
<keyword id="KW-0411">Iron-sulfur</keyword>
<keyword id="KW-0479">Metal-binding</keyword>
<keyword id="KW-0560">Oxidoreductase</keyword>
<keyword id="KW-0934">Plastid</keyword>
<keyword id="KW-0676">Redox-active center</keyword>
<gene>
    <name type="primary">ftrB</name>
</gene>
<geneLocation type="chloroplast"/>
<evidence type="ECO:0000250" key="1"/>
<evidence type="ECO:0000305" key="2"/>
<dbReference type="EC" id="1.8.7.2"/>
<dbReference type="EMBL" id="AP006715">
    <property type="protein sequence ID" value="BAE92510.1"/>
    <property type="status" value="ALT_INIT"/>
    <property type="molecule type" value="Genomic_DNA"/>
</dbReference>
<dbReference type="RefSeq" id="YP_537067.1">
    <property type="nucleotide sequence ID" value="NC_007932.1"/>
</dbReference>
<dbReference type="SMR" id="Q1XDA1"/>
<dbReference type="GeneID" id="3978885"/>
<dbReference type="GO" id="GO:0009507">
    <property type="term" value="C:chloroplast"/>
    <property type="evidence" value="ECO:0007669"/>
    <property type="project" value="UniProtKB-SubCell"/>
</dbReference>
<dbReference type="GO" id="GO:0051539">
    <property type="term" value="F:4 iron, 4 sulfur cluster binding"/>
    <property type="evidence" value="ECO:0000250"/>
    <property type="project" value="UniProtKB"/>
</dbReference>
<dbReference type="GO" id="GO:0009055">
    <property type="term" value="F:electron transfer activity"/>
    <property type="evidence" value="ECO:0000250"/>
    <property type="project" value="UniProtKB"/>
</dbReference>
<dbReference type="GO" id="GO:0046872">
    <property type="term" value="F:metal ion binding"/>
    <property type="evidence" value="ECO:0007669"/>
    <property type="project" value="UniProtKB-KW"/>
</dbReference>
<dbReference type="GO" id="GO:0016730">
    <property type="term" value="F:oxidoreductase activity, acting on iron-sulfur proteins as donors"/>
    <property type="evidence" value="ECO:0007669"/>
    <property type="project" value="InterPro"/>
</dbReference>
<dbReference type="FunFam" id="3.90.460.10:FF:000001">
    <property type="entry name" value="Ferredoxin-thioredoxin reductase, catalytic chain"/>
    <property type="match status" value="1"/>
</dbReference>
<dbReference type="Gene3D" id="3.90.460.10">
    <property type="entry name" value="Ferredoxin thioredoxin reductase catalytic beta subunit"/>
    <property type="match status" value="1"/>
</dbReference>
<dbReference type="InterPro" id="IPR004209">
    <property type="entry name" value="FTR_bsu"/>
</dbReference>
<dbReference type="InterPro" id="IPR024707">
    <property type="entry name" value="FTR_bsu_Cyanobacter"/>
</dbReference>
<dbReference type="InterPro" id="IPR036644">
    <property type="entry name" value="FTR_bsu_sf"/>
</dbReference>
<dbReference type="PANTHER" id="PTHR35113">
    <property type="entry name" value="FERREDOXIN-THIOREDOXIN REDUCTASE CATALYTIC CHAIN, CHLOROPLASTIC"/>
    <property type="match status" value="1"/>
</dbReference>
<dbReference type="PANTHER" id="PTHR35113:SF1">
    <property type="entry name" value="FERREDOXIN-THIOREDOXIN REDUCTASE CATALYTIC CHAIN, CHLOROPLASTIC"/>
    <property type="match status" value="1"/>
</dbReference>
<dbReference type="Pfam" id="PF02943">
    <property type="entry name" value="FeThRed_B"/>
    <property type="match status" value="1"/>
</dbReference>
<dbReference type="PIRSF" id="PIRSF000260">
    <property type="entry name" value="FTRc"/>
    <property type="match status" value="1"/>
</dbReference>
<dbReference type="SUPFAM" id="SSF57662">
    <property type="entry name" value="Ferredoxin thioredoxin reductase (FTR), catalytic beta chain"/>
    <property type="match status" value="1"/>
</dbReference>
<proteinExistence type="inferred from homology"/>
<sequence>MKKQNLVSFPENLEAMRKFSETYAKRTGTFFCIDSSVTAVVIEGLARHKDQYGAPLCPCRHYEDKKAEISATYWNCPCVPMRERRECHCMLFLTPDNEFASDLQEIDKTTLTEQIS</sequence>